<keyword id="KW-0997">Cell inner membrane</keyword>
<keyword id="KW-1003">Cell membrane</keyword>
<keyword id="KW-0472">Membrane</keyword>
<keyword id="KW-0762">Sugar transport</keyword>
<keyword id="KW-0812">Transmembrane</keyword>
<keyword id="KW-1133">Transmembrane helix</keyword>
<keyword id="KW-0813">Transport</keyword>
<comment type="function">
    <text evidence="1">Catalyzes the proton-dependent transport of sialic acid.</text>
</comment>
<comment type="catalytic activity">
    <reaction evidence="1">
        <text>N-acetylneuraminate(in) + H(+)(in) = N-acetylneuraminate(out) + H(+)(out)</text>
        <dbReference type="Rhea" id="RHEA:28987"/>
        <dbReference type="ChEBI" id="CHEBI:15378"/>
        <dbReference type="ChEBI" id="CHEBI:35418"/>
    </reaction>
</comment>
<comment type="subcellular location">
    <subcellularLocation>
        <location evidence="1">Cell inner membrane</location>
        <topology evidence="1">Multi-pass membrane protein</topology>
    </subcellularLocation>
</comment>
<comment type="similarity">
    <text evidence="1">Belongs to the major facilitator superfamily. Sialate:H(+) symporter (SHS) (TC 2.A.1.12) family.</text>
</comment>
<dbReference type="EMBL" id="CU928164">
    <property type="protein sequence ID" value="CAR19829.1"/>
    <property type="molecule type" value="Genomic_DNA"/>
</dbReference>
<dbReference type="RefSeq" id="WP_000108473.1">
    <property type="nucleotide sequence ID" value="NC_011750.1"/>
</dbReference>
<dbReference type="RefSeq" id="YP_002409616.1">
    <property type="nucleotide sequence ID" value="NC_011750.1"/>
</dbReference>
<dbReference type="SMR" id="B7NKT5"/>
<dbReference type="STRING" id="585057.ECIAI39_3713"/>
<dbReference type="KEGG" id="ect:ECIAI39_3713"/>
<dbReference type="PATRIC" id="fig|585057.6.peg.3848"/>
<dbReference type="HOGENOM" id="CLU_001265_46_8_6"/>
<dbReference type="Proteomes" id="UP000000749">
    <property type="component" value="Chromosome"/>
</dbReference>
<dbReference type="GO" id="GO:0005886">
    <property type="term" value="C:plasma membrane"/>
    <property type="evidence" value="ECO:0007669"/>
    <property type="project" value="UniProtKB-SubCell"/>
</dbReference>
<dbReference type="GO" id="GO:0046943">
    <property type="term" value="F:carboxylic acid transmembrane transporter activity"/>
    <property type="evidence" value="ECO:0007669"/>
    <property type="project" value="TreeGrafter"/>
</dbReference>
<dbReference type="GO" id="GO:0015538">
    <property type="term" value="F:sialic acid:proton symporter activity"/>
    <property type="evidence" value="ECO:0007669"/>
    <property type="project" value="UniProtKB-UniRule"/>
</dbReference>
<dbReference type="CDD" id="cd17316">
    <property type="entry name" value="MFS_SV2_like"/>
    <property type="match status" value="1"/>
</dbReference>
<dbReference type="FunFam" id="1.20.1250.20:FF:000027">
    <property type="entry name" value="Sialic acid transporter NanT"/>
    <property type="match status" value="1"/>
</dbReference>
<dbReference type="FunFam" id="1.20.1250.20:FF:000038">
    <property type="entry name" value="Sialic acid transporter NanT"/>
    <property type="match status" value="1"/>
</dbReference>
<dbReference type="Gene3D" id="1.20.1250.20">
    <property type="entry name" value="MFS general substrate transporter like domains"/>
    <property type="match status" value="2"/>
</dbReference>
<dbReference type="HAMAP" id="MF_01238">
    <property type="entry name" value="MFS_NanT"/>
    <property type="match status" value="1"/>
</dbReference>
<dbReference type="InterPro" id="IPR011701">
    <property type="entry name" value="MFS"/>
</dbReference>
<dbReference type="InterPro" id="IPR020846">
    <property type="entry name" value="MFS_dom"/>
</dbReference>
<dbReference type="InterPro" id="IPR036259">
    <property type="entry name" value="MFS_trans_sf"/>
</dbReference>
<dbReference type="InterPro" id="IPR004742">
    <property type="entry name" value="SA_transporter"/>
</dbReference>
<dbReference type="NCBIfam" id="TIGR00891">
    <property type="entry name" value="2A0112"/>
    <property type="match status" value="1"/>
</dbReference>
<dbReference type="NCBIfam" id="NF003024">
    <property type="entry name" value="PRK03893.1"/>
    <property type="match status" value="1"/>
</dbReference>
<dbReference type="PANTHER" id="PTHR23508">
    <property type="entry name" value="CARBOXYLIC ACID TRANSPORTER PROTEIN HOMOLOG"/>
    <property type="match status" value="1"/>
</dbReference>
<dbReference type="PANTHER" id="PTHR23508:SF3">
    <property type="entry name" value="SIALIC ACID TRANSPORTER NANT"/>
    <property type="match status" value="1"/>
</dbReference>
<dbReference type="Pfam" id="PF07690">
    <property type="entry name" value="MFS_1"/>
    <property type="match status" value="1"/>
</dbReference>
<dbReference type="SUPFAM" id="SSF103473">
    <property type="entry name" value="MFS general substrate transporter"/>
    <property type="match status" value="1"/>
</dbReference>
<dbReference type="PROSITE" id="PS50850">
    <property type="entry name" value="MFS"/>
    <property type="match status" value="1"/>
</dbReference>
<evidence type="ECO:0000255" key="1">
    <source>
        <dbReference type="HAMAP-Rule" id="MF_01238"/>
    </source>
</evidence>
<gene>
    <name evidence="1" type="primary">nanT</name>
    <name type="ordered locus">ECIAI39_3713</name>
</gene>
<feature type="chain" id="PRO_1000214044" description="Sialic acid transporter NanT">
    <location>
        <begin position="1"/>
        <end position="496"/>
    </location>
</feature>
<feature type="transmembrane region" description="Helical" evidence="1">
    <location>
        <begin position="22"/>
        <end position="42"/>
    </location>
</feature>
<feature type="transmembrane region" description="Helical" evidence="1">
    <location>
        <begin position="58"/>
        <end position="78"/>
    </location>
</feature>
<feature type="transmembrane region" description="Helical" evidence="1">
    <location>
        <begin position="92"/>
        <end position="112"/>
    </location>
</feature>
<feature type="transmembrane region" description="Helical" evidence="1">
    <location>
        <begin position="116"/>
        <end position="136"/>
    </location>
</feature>
<feature type="transmembrane region" description="Helical" evidence="1">
    <location>
        <begin position="148"/>
        <end position="168"/>
    </location>
</feature>
<feature type="transmembrane region" description="Helical" evidence="1">
    <location>
        <begin position="170"/>
        <end position="190"/>
    </location>
</feature>
<feature type="transmembrane region" description="Helical" evidence="1">
    <location>
        <begin position="224"/>
        <end position="244"/>
    </location>
</feature>
<feature type="transmembrane region" description="Helical" evidence="1">
    <location>
        <begin position="247"/>
        <end position="267"/>
    </location>
</feature>
<feature type="transmembrane region" description="Helical" evidence="1">
    <location>
        <begin position="278"/>
        <end position="298"/>
    </location>
</feature>
<feature type="transmembrane region" description="Helical" evidence="1">
    <location>
        <begin position="313"/>
        <end position="333"/>
    </location>
</feature>
<feature type="transmembrane region" description="Helical" evidence="1">
    <location>
        <begin position="353"/>
        <end position="375"/>
    </location>
</feature>
<feature type="transmembrane region" description="Helical" evidence="1">
    <location>
        <begin position="406"/>
        <end position="426"/>
    </location>
</feature>
<feature type="transmembrane region" description="Helical" evidence="1">
    <location>
        <begin position="431"/>
        <end position="451"/>
    </location>
</feature>
<sequence length="496" mass="53568">MSTTTQNIPWYRHLNRAQWRAFSAAWLGYLLDGFDFVLIALVLTEVQGEFGLTTVQAASLISAAFISRWFGGLMLGAMGDRYGRRLAMVTSIVLFSAGTLACGFAPGYITMFIARLVIGMGMAGEYGSSATYVIESWPKHLRNKASGFLISGFSVGAVVAAQVYSLVVPVWGWRALFFIGILPIIFALWLRKNIPEAEDWKEKHGGKAPVRTMVDILYRGEHRIANIVMTLAAATALWFCFAGNLQNAAIVAVLGLLCAAIFISFMVQSTGKRWPTGVMLMVVVLFAFLYSWPIQALLPTYLKTDLAYDPHTVANVLFFSGFGAAVGCCVGGFLGDWLGTRKAYVCSLLASQLLIIPVFAIGGANVWVLGLLLFFQQMLGQGIAGILPKLIGGYFDTDQRAAGLGFTYNVGALGGALAPIIGALIAQRLDLGTALASLSFSLTFVVILLIGLDMPSRVQRWLRPEALRTHDAIDGKPFSGAVPFGSAKNDLVKTKS</sequence>
<protein>
    <recommendedName>
        <fullName evidence="1">Sialic acid transporter NanT</fullName>
    </recommendedName>
    <alternativeName>
        <fullName evidence="1">Sialic acid permease</fullName>
    </alternativeName>
    <alternativeName>
        <fullName evidence="1">Sialic acid/H(+) symporter</fullName>
    </alternativeName>
</protein>
<proteinExistence type="inferred from homology"/>
<name>NANT_ECO7I</name>
<reference key="1">
    <citation type="journal article" date="2009" name="PLoS Genet.">
        <title>Organised genome dynamics in the Escherichia coli species results in highly diverse adaptive paths.</title>
        <authorList>
            <person name="Touchon M."/>
            <person name="Hoede C."/>
            <person name="Tenaillon O."/>
            <person name="Barbe V."/>
            <person name="Baeriswyl S."/>
            <person name="Bidet P."/>
            <person name="Bingen E."/>
            <person name="Bonacorsi S."/>
            <person name="Bouchier C."/>
            <person name="Bouvet O."/>
            <person name="Calteau A."/>
            <person name="Chiapello H."/>
            <person name="Clermont O."/>
            <person name="Cruveiller S."/>
            <person name="Danchin A."/>
            <person name="Diard M."/>
            <person name="Dossat C."/>
            <person name="Karoui M.E."/>
            <person name="Frapy E."/>
            <person name="Garry L."/>
            <person name="Ghigo J.M."/>
            <person name="Gilles A.M."/>
            <person name="Johnson J."/>
            <person name="Le Bouguenec C."/>
            <person name="Lescat M."/>
            <person name="Mangenot S."/>
            <person name="Martinez-Jehanne V."/>
            <person name="Matic I."/>
            <person name="Nassif X."/>
            <person name="Oztas S."/>
            <person name="Petit M.A."/>
            <person name="Pichon C."/>
            <person name="Rouy Z."/>
            <person name="Ruf C.S."/>
            <person name="Schneider D."/>
            <person name="Tourret J."/>
            <person name="Vacherie B."/>
            <person name="Vallenet D."/>
            <person name="Medigue C."/>
            <person name="Rocha E.P.C."/>
            <person name="Denamur E."/>
        </authorList>
    </citation>
    <scope>NUCLEOTIDE SEQUENCE [LARGE SCALE GENOMIC DNA]</scope>
    <source>
        <strain>IAI39 / ExPEC</strain>
    </source>
</reference>
<organism>
    <name type="scientific">Escherichia coli O7:K1 (strain IAI39 / ExPEC)</name>
    <dbReference type="NCBI Taxonomy" id="585057"/>
    <lineage>
        <taxon>Bacteria</taxon>
        <taxon>Pseudomonadati</taxon>
        <taxon>Pseudomonadota</taxon>
        <taxon>Gammaproteobacteria</taxon>
        <taxon>Enterobacterales</taxon>
        <taxon>Enterobacteriaceae</taxon>
        <taxon>Escherichia</taxon>
    </lineage>
</organism>
<accession>B7NKT5</accession>